<protein>
    <recommendedName>
        <fullName evidence="1">Ribonuclease 3</fullName>
        <ecNumber evidence="1">3.1.26.3</ecNumber>
    </recommendedName>
    <alternativeName>
        <fullName evidence="1">Ribonuclease III</fullName>
        <shortName evidence="1">RNase III</shortName>
    </alternativeName>
</protein>
<feature type="chain" id="PRO_0000228520" description="Ribonuclease 3">
    <location>
        <begin position="1"/>
        <end position="244"/>
    </location>
</feature>
<feature type="domain" description="RNase III" evidence="1">
    <location>
        <begin position="21"/>
        <end position="148"/>
    </location>
</feature>
<feature type="domain" description="DRBM" evidence="1">
    <location>
        <begin position="175"/>
        <end position="242"/>
    </location>
</feature>
<feature type="active site" evidence="1">
    <location>
        <position position="65"/>
    </location>
</feature>
<feature type="active site" evidence="1">
    <location>
        <position position="137"/>
    </location>
</feature>
<feature type="binding site" evidence="1">
    <location>
        <position position="61"/>
    </location>
    <ligand>
        <name>Mg(2+)</name>
        <dbReference type="ChEBI" id="CHEBI:18420"/>
    </ligand>
</feature>
<feature type="binding site" evidence="1">
    <location>
        <position position="134"/>
    </location>
    <ligand>
        <name>Mg(2+)</name>
        <dbReference type="ChEBI" id="CHEBI:18420"/>
    </ligand>
</feature>
<feature type="binding site" evidence="1">
    <location>
        <position position="137"/>
    </location>
    <ligand>
        <name>Mg(2+)</name>
        <dbReference type="ChEBI" id="CHEBI:18420"/>
    </ligand>
</feature>
<name>RNC_CORJK</name>
<organism>
    <name type="scientific">Corynebacterium jeikeium (strain K411)</name>
    <dbReference type="NCBI Taxonomy" id="306537"/>
    <lineage>
        <taxon>Bacteria</taxon>
        <taxon>Bacillati</taxon>
        <taxon>Actinomycetota</taxon>
        <taxon>Actinomycetes</taxon>
        <taxon>Mycobacteriales</taxon>
        <taxon>Corynebacteriaceae</taxon>
        <taxon>Corynebacterium</taxon>
    </lineage>
</organism>
<comment type="function">
    <text evidence="1">Digests double-stranded RNA. Involved in the processing of primary rRNA transcript to yield the immediate precursors to the large and small rRNAs (23S and 16S). Processes some mRNAs, and tRNAs when they are encoded in the rRNA operon. Processes pre-crRNA and tracrRNA of type II CRISPR loci if present in the organism.</text>
</comment>
<comment type="catalytic activity">
    <reaction evidence="1">
        <text>Endonucleolytic cleavage to 5'-phosphomonoester.</text>
        <dbReference type="EC" id="3.1.26.3"/>
    </reaction>
</comment>
<comment type="cofactor">
    <cofactor evidence="1">
        <name>Mg(2+)</name>
        <dbReference type="ChEBI" id="CHEBI:18420"/>
    </cofactor>
</comment>
<comment type="subunit">
    <text evidence="1">Homodimer.</text>
</comment>
<comment type="subcellular location">
    <subcellularLocation>
        <location evidence="1">Cytoplasm</location>
    </subcellularLocation>
</comment>
<comment type="similarity">
    <text evidence="1">Belongs to the ribonuclease III family.</text>
</comment>
<sequence length="244" mass="26944">MARKRRLTGEAALNAAYGKSDHAPLLEAWGVDLPDDLLRLALTHRSFANENGHLPNNERLEFLGDAVLGLAVAEQLYRQFPERAESDISKMRSGVVNMYALADVARRLGMGDYILLGRGEMLTGGKDKHSILADSVESMLGAIYLHHGFEVARATVLRLFAEKITEAPTTGLTMDWKTVLLEKLSDMKLPLPTYEVRGEGPEHDKTFYATVTIEDLVTHGEGHTKKVAEHAAAKQAVQKLNERA</sequence>
<reference key="1">
    <citation type="journal article" date="2005" name="J. Bacteriol.">
        <title>Complete genome sequence and analysis of the multiresistant nosocomial pathogen Corynebacterium jeikeium K411, a lipid-requiring bacterium of the human skin flora.</title>
        <authorList>
            <person name="Tauch A."/>
            <person name="Kaiser O."/>
            <person name="Hain T."/>
            <person name="Goesmann A."/>
            <person name="Weisshaar B."/>
            <person name="Albersmeier A."/>
            <person name="Bekel T."/>
            <person name="Bischoff N."/>
            <person name="Brune I."/>
            <person name="Chakraborty T."/>
            <person name="Kalinowski J."/>
            <person name="Meyer F."/>
            <person name="Rupp O."/>
            <person name="Schneiker S."/>
            <person name="Viehoever P."/>
            <person name="Puehler A."/>
        </authorList>
    </citation>
    <scope>NUCLEOTIDE SEQUENCE [LARGE SCALE GENOMIC DNA]</scope>
    <source>
        <strain>K411</strain>
    </source>
</reference>
<gene>
    <name evidence="1" type="primary">rnc</name>
    <name type="ordered locus">jk1206</name>
</gene>
<proteinExistence type="inferred from homology"/>
<accession>Q4JUY7</accession>
<dbReference type="EC" id="3.1.26.3" evidence="1"/>
<dbReference type="EMBL" id="CR931997">
    <property type="protein sequence ID" value="CAI37370.1"/>
    <property type="molecule type" value="Genomic_DNA"/>
</dbReference>
<dbReference type="RefSeq" id="WP_011273723.1">
    <property type="nucleotide sequence ID" value="NC_007164.1"/>
</dbReference>
<dbReference type="SMR" id="Q4JUY7"/>
<dbReference type="STRING" id="306537.jk1206"/>
<dbReference type="KEGG" id="cjk:jk1206"/>
<dbReference type="PATRIC" id="fig|306537.10.peg.1220"/>
<dbReference type="eggNOG" id="COG0571">
    <property type="taxonomic scope" value="Bacteria"/>
</dbReference>
<dbReference type="HOGENOM" id="CLU_000907_1_2_11"/>
<dbReference type="OrthoDB" id="9805026at2"/>
<dbReference type="Proteomes" id="UP000000545">
    <property type="component" value="Chromosome"/>
</dbReference>
<dbReference type="GO" id="GO:0005737">
    <property type="term" value="C:cytoplasm"/>
    <property type="evidence" value="ECO:0007669"/>
    <property type="project" value="UniProtKB-SubCell"/>
</dbReference>
<dbReference type="GO" id="GO:0003725">
    <property type="term" value="F:double-stranded RNA binding"/>
    <property type="evidence" value="ECO:0007669"/>
    <property type="project" value="TreeGrafter"/>
</dbReference>
<dbReference type="GO" id="GO:0046872">
    <property type="term" value="F:metal ion binding"/>
    <property type="evidence" value="ECO:0007669"/>
    <property type="project" value="UniProtKB-KW"/>
</dbReference>
<dbReference type="GO" id="GO:0004525">
    <property type="term" value="F:ribonuclease III activity"/>
    <property type="evidence" value="ECO:0007669"/>
    <property type="project" value="UniProtKB-UniRule"/>
</dbReference>
<dbReference type="GO" id="GO:0019843">
    <property type="term" value="F:rRNA binding"/>
    <property type="evidence" value="ECO:0007669"/>
    <property type="project" value="UniProtKB-KW"/>
</dbReference>
<dbReference type="GO" id="GO:0006397">
    <property type="term" value="P:mRNA processing"/>
    <property type="evidence" value="ECO:0007669"/>
    <property type="project" value="UniProtKB-UniRule"/>
</dbReference>
<dbReference type="GO" id="GO:0010468">
    <property type="term" value="P:regulation of gene expression"/>
    <property type="evidence" value="ECO:0007669"/>
    <property type="project" value="TreeGrafter"/>
</dbReference>
<dbReference type="GO" id="GO:0006364">
    <property type="term" value="P:rRNA processing"/>
    <property type="evidence" value="ECO:0007669"/>
    <property type="project" value="UniProtKB-UniRule"/>
</dbReference>
<dbReference type="GO" id="GO:0008033">
    <property type="term" value="P:tRNA processing"/>
    <property type="evidence" value="ECO:0007669"/>
    <property type="project" value="UniProtKB-KW"/>
</dbReference>
<dbReference type="CDD" id="cd10845">
    <property type="entry name" value="DSRM_RNAse_III_family"/>
    <property type="match status" value="1"/>
</dbReference>
<dbReference type="CDD" id="cd00593">
    <property type="entry name" value="RIBOc"/>
    <property type="match status" value="1"/>
</dbReference>
<dbReference type="FunFam" id="1.10.1520.10:FF:000001">
    <property type="entry name" value="Ribonuclease 3"/>
    <property type="match status" value="1"/>
</dbReference>
<dbReference type="Gene3D" id="3.30.160.20">
    <property type="match status" value="1"/>
</dbReference>
<dbReference type="Gene3D" id="1.10.1520.10">
    <property type="entry name" value="Ribonuclease III domain"/>
    <property type="match status" value="1"/>
</dbReference>
<dbReference type="HAMAP" id="MF_00104">
    <property type="entry name" value="RNase_III"/>
    <property type="match status" value="1"/>
</dbReference>
<dbReference type="InterPro" id="IPR014720">
    <property type="entry name" value="dsRBD_dom"/>
</dbReference>
<dbReference type="InterPro" id="IPR011907">
    <property type="entry name" value="RNase_III"/>
</dbReference>
<dbReference type="InterPro" id="IPR000999">
    <property type="entry name" value="RNase_III_dom"/>
</dbReference>
<dbReference type="InterPro" id="IPR036389">
    <property type="entry name" value="RNase_III_sf"/>
</dbReference>
<dbReference type="NCBIfam" id="TIGR02191">
    <property type="entry name" value="RNaseIII"/>
    <property type="match status" value="1"/>
</dbReference>
<dbReference type="PANTHER" id="PTHR11207:SF0">
    <property type="entry name" value="RIBONUCLEASE 3"/>
    <property type="match status" value="1"/>
</dbReference>
<dbReference type="PANTHER" id="PTHR11207">
    <property type="entry name" value="RIBONUCLEASE III"/>
    <property type="match status" value="1"/>
</dbReference>
<dbReference type="Pfam" id="PF00035">
    <property type="entry name" value="dsrm"/>
    <property type="match status" value="1"/>
</dbReference>
<dbReference type="Pfam" id="PF14622">
    <property type="entry name" value="Ribonucleas_3_3"/>
    <property type="match status" value="1"/>
</dbReference>
<dbReference type="SMART" id="SM00358">
    <property type="entry name" value="DSRM"/>
    <property type="match status" value="1"/>
</dbReference>
<dbReference type="SMART" id="SM00535">
    <property type="entry name" value="RIBOc"/>
    <property type="match status" value="1"/>
</dbReference>
<dbReference type="SUPFAM" id="SSF54768">
    <property type="entry name" value="dsRNA-binding domain-like"/>
    <property type="match status" value="1"/>
</dbReference>
<dbReference type="SUPFAM" id="SSF69065">
    <property type="entry name" value="RNase III domain-like"/>
    <property type="match status" value="1"/>
</dbReference>
<dbReference type="PROSITE" id="PS50137">
    <property type="entry name" value="DS_RBD"/>
    <property type="match status" value="1"/>
</dbReference>
<dbReference type="PROSITE" id="PS00517">
    <property type="entry name" value="RNASE_3_1"/>
    <property type="match status" value="1"/>
</dbReference>
<dbReference type="PROSITE" id="PS50142">
    <property type="entry name" value="RNASE_3_2"/>
    <property type="match status" value="1"/>
</dbReference>
<evidence type="ECO:0000255" key="1">
    <source>
        <dbReference type="HAMAP-Rule" id="MF_00104"/>
    </source>
</evidence>
<keyword id="KW-0963">Cytoplasm</keyword>
<keyword id="KW-0255">Endonuclease</keyword>
<keyword id="KW-0378">Hydrolase</keyword>
<keyword id="KW-0460">Magnesium</keyword>
<keyword id="KW-0479">Metal-binding</keyword>
<keyword id="KW-0507">mRNA processing</keyword>
<keyword id="KW-0540">Nuclease</keyword>
<keyword id="KW-1185">Reference proteome</keyword>
<keyword id="KW-0694">RNA-binding</keyword>
<keyword id="KW-0698">rRNA processing</keyword>
<keyword id="KW-0699">rRNA-binding</keyword>
<keyword id="KW-0819">tRNA processing</keyword>